<proteinExistence type="inferred from homology"/>
<sequence length="226" mass="24562">MTDGTRELVIAMDGPAGAGKSTVARIVANRLGYLYIDTGAMYRALALKALRLGIPETDAAALADLADATEVELQRAPDGGNRVLLDGEDVTAEIRSPAVSAVVSQVSAVPRLRQRLIEVQRSMARAGGVVMDGRDIGSYVLPHADRKFYITASLQERARRRVAQLRAEGHEADLAAVEAEIARRDEQDMNKGVHSLVQLPESIVIDTTGKRVDEVVEEILRHCRRT</sequence>
<comment type="catalytic activity">
    <reaction evidence="1">
        <text>CMP + ATP = CDP + ADP</text>
        <dbReference type="Rhea" id="RHEA:11600"/>
        <dbReference type="ChEBI" id="CHEBI:30616"/>
        <dbReference type="ChEBI" id="CHEBI:58069"/>
        <dbReference type="ChEBI" id="CHEBI:60377"/>
        <dbReference type="ChEBI" id="CHEBI:456216"/>
        <dbReference type="EC" id="2.7.4.25"/>
    </reaction>
</comment>
<comment type="catalytic activity">
    <reaction evidence="1">
        <text>dCMP + ATP = dCDP + ADP</text>
        <dbReference type="Rhea" id="RHEA:25094"/>
        <dbReference type="ChEBI" id="CHEBI:30616"/>
        <dbReference type="ChEBI" id="CHEBI:57566"/>
        <dbReference type="ChEBI" id="CHEBI:58593"/>
        <dbReference type="ChEBI" id="CHEBI:456216"/>
        <dbReference type="EC" id="2.7.4.25"/>
    </reaction>
</comment>
<comment type="subcellular location">
    <subcellularLocation>
        <location evidence="1">Cytoplasm</location>
    </subcellularLocation>
</comment>
<comment type="similarity">
    <text evidence="1">Belongs to the cytidylate kinase family. Type 1 subfamily.</text>
</comment>
<dbReference type="EC" id="2.7.4.25" evidence="1"/>
<dbReference type="EMBL" id="AP006840">
    <property type="protein sequence ID" value="BAD40653.1"/>
    <property type="molecule type" value="Genomic_DNA"/>
</dbReference>
<dbReference type="RefSeq" id="WP_011195797.1">
    <property type="nucleotide sequence ID" value="NC_006177.1"/>
</dbReference>
<dbReference type="SMR" id="Q67NU0"/>
<dbReference type="STRING" id="292459.STH1668"/>
<dbReference type="KEGG" id="sth:STH1668"/>
<dbReference type="eggNOG" id="COG0283">
    <property type="taxonomic scope" value="Bacteria"/>
</dbReference>
<dbReference type="HOGENOM" id="CLU_079959_0_0_9"/>
<dbReference type="Proteomes" id="UP000000417">
    <property type="component" value="Chromosome"/>
</dbReference>
<dbReference type="GO" id="GO:0005737">
    <property type="term" value="C:cytoplasm"/>
    <property type="evidence" value="ECO:0007669"/>
    <property type="project" value="UniProtKB-SubCell"/>
</dbReference>
<dbReference type="GO" id="GO:0005524">
    <property type="term" value="F:ATP binding"/>
    <property type="evidence" value="ECO:0007669"/>
    <property type="project" value="UniProtKB-UniRule"/>
</dbReference>
<dbReference type="GO" id="GO:0036430">
    <property type="term" value="F:CMP kinase activity"/>
    <property type="evidence" value="ECO:0007669"/>
    <property type="project" value="RHEA"/>
</dbReference>
<dbReference type="GO" id="GO:0036431">
    <property type="term" value="F:dCMP kinase activity"/>
    <property type="evidence" value="ECO:0007669"/>
    <property type="project" value="RHEA"/>
</dbReference>
<dbReference type="GO" id="GO:0006220">
    <property type="term" value="P:pyrimidine nucleotide metabolic process"/>
    <property type="evidence" value="ECO:0007669"/>
    <property type="project" value="UniProtKB-UniRule"/>
</dbReference>
<dbReference type="CDD" id="cd02020">
    <property type="entry name" value="CMPK"/>
    <property type="match status" value="1"/>
</dbReference>
<dbReference type="Gene3D" id="3.40.50.300">
    <property type="entry name" value="P-loop containing nucleotide triphosphate hydrolases"/>
    <property type="match status" value="1"/>
</dbReference>
<dbReference type="HAMAP" id="MF_00238">
    <property type="entry name" value="Cytidyl_kinase_type1"/>
    <property type="match status" value="1"/>
</dbReference>
<dbReference type="InterPro" id="IPR003136">
    <property type="entry name" value="Cytidylate_kin"/>
</dbReference>
<dbReference type="InterPro" id="IPR011994">
    <property type="entry name" value="Cytidylate_kinase_dom"/>
</dbReference>
<dbReference type="InterPro" id="IPR027417">
    <property type="entry name" value="P-loop_NTPase"/>
</dbReference>
<dbReference type="NCBIfam" id="TIGR00017">
    <property type="entry name" value="cmk"/>
    <property type="match status" value="1"/>
</dbReference>
<dbReference type="Pfam" id="PF02224">
    <property type="entry name" value="Cytidylate_kin"/>
    <property type="match status" value="1"/>
</dbReference>
<dbReference type="SUPFAM" id="SSF52540">
    <property type="entry name" value="P-loop containing nucleoside triphosphate hydrolases"/>
    <property type="match status" value="1"/>
</dbReference>
<feature type="chain" id="PRO_0000131991" description="Cytidylate kinase">
    <location>
        <begin position="1"/>
        <end position="226"/>
    </location>
</feature>
<feature type="binding site" evidence="1">
    <location>
        <begin position="14"/>
        <end position="22"/>
    </location>
    <ligand>
        <name>ATP</name>
        <dbReference type="ChEBI" id="CHEBI:30616"/>
    </ligand>
</feature>
<gene>
    <name evidence="1" type="primary">cmk</name>
    <name type="ordered locus">STH1668</name>
</gene>
<keyword id="KW-0067">ATP-binding</keyword>
<keyword id="KW-0963">Cytoplasm</keyword>
<keyword id="KW-0418">Kinase</keyword>
<keyword id="KW-0547">Nucleotide-binding</keyword>
<keyword id="KW-1185">Reference proteome</keyword>
<keyword id="KW-0808">Transferase</keyword>
<evidence type="ECO:0000255" key="1">
    <source>
        <dbReference type="HAMAP-Rule" id="MF_00238"/>
    </source>
</evidence>
<reference key="1">
    <citation type="journal article" date="2004" name="Nucleic Acids Res.">
        <title>Genome sequence of Symbiobacterium thermophilum, an uncultivable bacterium that depends on microbial commensalism.</title>
        <authorList>
            <person name="Ueda K."/>
            <person name="Yamashita A."/>
            <person name="Ishikawa J."/>
            <person name="Shimada M."/>
            <person name="Watsuji T."/>
            <person name="Morimura K."/>
            <person name="Ikeda H."/>
            <person name="Hattori M."/>
            <person name="Beppu T."/>
        </authorList>
    </citation>
    <scope>NUCLEOTIDE SEQUENCE [LARGE SCALE GENOMIC DNA]</scope>
    <source>
        <strain>DSM 24528 / JCM 14929 / IAM 14863 / T</strain>
    </source>
</reference>
<accession>Q67NU0</accession>
<protein>
    <recommendedName>
        <fullName evidence="1">Cytidylate kinase</fullName>
        <shortName evidence="1">CK</shortName>
        <ecNumber evidence="1">2.7.4.25</ecNumber>
    </recommendedName>
    <alternativeName>
        <fullName evidence="1">Cytidine monophosphate kinase</fullName>
        <shortName evidence="1">CMP kinase</shortName>
    </alternativeName>
</protein>
<organism>
    <name type="scientific">Symbiobacterium thermophilum (strain DSM 24528 / JCM 14929 / IAM 14863 / T)</name>
    <dbReference type="NCBI Taxonomy" id="292459"/>
    <lineage>
        <taxon>Bacteria</taxon>
        <taxon>Bacillati</taxon>
        <taxon>Bacillota</taxon>
        <taxon>Clostridia</taxon>
        <taxon>Eubacteriales</taxon>
        <taxon>Symbiobacteriaceae</taxon>
        <taxon>Symbiobacterium</taxon>
    </lineage>
</organism>
<name>KCY_SYMTH</name>